<evidence type="ECO:0000250" key="1">
    <source>
        <dbReference type="UniProtKB" id="B2G331"/>
    </source>
</evidence>
<evidence type="ECO:0000250" key="2">
    <source>
        <dbReference type="UniProtKB" id="P00974"/>
    </source>
</evidence>
<evidence type="ECO:0000269" key="3">
    <source>
    </source>
</evidence>
<evidence type="ECO:0000303" key="4">
    <source>
    </source>
</evidence>
<evidence type="ECO:0000305" key="5"/>
<sequence length="15" mass="1430">GICSEPIVVGPCKAG</sequence>
<reference key="1">
    <citation type="journal article" date="2007" name="Biochemistry (Mosc.)">
        <title>Proteinase inhibitors from the tropical sea anemone Radianthus macrodactylus: isolation and characteristic.</title>
        <authorList>
            <person name="Sokotun I.N."/>
            <person name="Il'ina A.P."/>
            <person name="Monastyrnaya M.M."/>
            <person name="Leychenko E.V."/>
            <person name="Es'kov A.A."/>
            <person name="Anastuk S.D."/>
            <person name="Kozlovskaya E.P."/>
        </authorList>
    </citation>
    <scope>PROTEIN SEQUENCE</scope>
    <scope>FUNCTION</scope>
    <scope>MASS SPECTROMETRY</scope>
</reference>
<accession>P0DV07</accession>
<dbReference type="GO" id="GO:0005576">
    <property type="term" value="C:extracellular region"/>
    <property type="evidence" value="ECO:0007669"/>
    <property type="project" value="UniProtKB-SubCell"/>
</dbReference>
<dbReference type="GO" id="GO:0042151">
    <property type="term" value="C:nematocyst"/>
    <property type="evidence" value="ECO:0007669"/>
    <property type="project" value="UniProtKB-SubCell"/>
</dbReference>
<dbReference type="GO" id="GO:0099106">
    <property type="term" value="F:ion channel regulator activity"/>
    <property type="evidence" value="ECO:0007669"/>
    <property type="project" value="UniProtKB-KW"/>
</dbReference>
<dbReference type="GO" id="GO:0004867">
    <property type="term" value="F:serine-type endopeptidase inhibitor activity"/>
    <property type="evidence" value="ECO:0007669"/>
    <property type="project" value="UniProtKB-KW"/>
</dbReference>
<dbReference type="GO" id="GO:0090729">
    <property type="term" value="F:toxin activity"/>
    <property type="evidence" value="ECO:0007669"/>
    <property type="project" value="UniProtKB-KW"/>
</dbReference>
<protein>
    <recommendedName>
        <fullName evidence="5">PI-stichotoxin-Hcr2k</fullName>
        <shortName evidence="5">PI-SHTX-Hcr2k</shortName>
    </recommendedName>
    <alternativeName>
        <fullName evidence="4">Kunitz-type serine protease inhibitor RmIn I</fullName>
    </alternativeName>
</protein>
<name>VT2K_RADCR</name>
<proteinExistence type="evidence at protein level"/>
<comment type="function">
    <text evidence="1 3">This recombinant serine protease inhibitor inhibits both trypsin (Ki=2.4 nM) and chymotrypsin (Ki=23 nM) (PubMed:17447883). It may also inhibit the TRPV1 receptor, a receptor of the pain pathway (By similarity). In vivo, shows anti-histamine activity, since it dose-dependently weakens the clinical manifestation of the allergic reaction induced by histamine injection. In vivo, does not show toxicity to mice by intraperitoneal injection (PubMed:17447883).</text>
</comment>
<comment type="subcellular location">
    <subcellularLocation>
        <location evidence="5">Secreted</location>
    </subcellularLocation>
    <subcellularLocation>
        <location evidence="5">Nematocyst</location>
    </subcellularLocation>
</comment>
<comment type="mass spectrometry" mass="6201.6" method="MALDI" evidence="3"/>
<comment type="miscellaneous">
    <text evidence="5">A synonymy between H.magnifica and R.crispa is controversial.</text>
</comment>
<comment type="similarity">
    <text evidence="5">Belongs to the venom Kunitz-type family. Sea anemone type 2 potassium channel toxin subfamily.</text>
</comment>
<keyword id="KW-0903">Direct protein sequencing</keyword>
<keyword id="KW-1015">Disulfide bond</keyword>
<keyword id="KW-0872">Ion channel impairing toxin</keyword>
<keyword id="KW-0166">Nematocyst</keyword>
<keyword id="KW-0646">Protease inhibitor</keyword>
<keyword id="KW-0964">Secreted</keyword>
<keyword id="KW-0722">Serine protease inhibitor</keyword>
<keyword id="KW-0800">Toxin</keyword>
<organism>
    <name type="scientific">Radianthus crispa</name>
    <name type="common">Leathery sea anemone</name>
    <name type="synonym">Heteractis crispa</name>
    <dbReference type="NCBI Taxonomy" id="3122430"/>
    <lineage>
        <taxon>Eukaryota</taxon>
        <taxon>Metazoa</taxon>
        <taxon>Cnidaria</taxon>
        <taxon>Anthozoa</taxon>
        <taxon>Hexacorallia</taxon>
        <taxon>Actiniaria</taxon>
        <taxon>Stichodactylidae</taxon>
        <taxon>Radianthus</taxon>
    </lineage>
</organism>
<feature type="chain" id="PRO_0000454108" description="PI-stichotoxin-Hcr2k">
    <location>
        <begin position="1"/>
        <end position="15" status="greater than"/>
    </location>
</feature>
<feature type="site" description="Reactive bond for trypsin" evidence="2">
    <location>
        <begin position="13"/>
        <end position="14"/>
    </location>
</feature>
<feature type="disulfide bond" evidence="5">
    <location>
        <begin position="3"/>
        <end status="unknown"/>
    </location>
</feature>
<feature type="disulfide bond" evidence="5">
    <location>
        <begin position="12"/>
        <end status="unknown"/>
    </location>
</feature>
<feature type="non-terminal residue" evidence="5">
    <location>
        <position position="15"/>
    </location>
</feature>